<evidence type="ECO:0000255" key="1">
    <source>
        <dbReference type="HAMAP-Rule" id="MF_01810"/>
    </source>
</evidence>
<evidence type="ECO:0000256" key="2">
    <source>
        <dbReference type="SAM" id="MobiDB-lite"/>
    </source>
</evidence>
<protein>
    <recommendedName>
        <fullName evidence="1">Membrane protein insertase YidC</fullName>
    </recommendedName>
    <alternativeName>
        <fullName evidence="1">Foldase YidC</fullName>
    </alternativeName>
    <alternativeName>
        <fullName evidence="1">Membrane integrase YidC</fullName>
    </alternativeName>
    <alternativeName>
        <fullName evidence="1">Membrane protein YidC</fullName>
    </alternativeName>
</protein>
<sequence length="578" mass="64683">MDQKRLFLAIAISLGILLGFQGLYRHFVPEPPAAARTATNAGQGKPNNTLGAVPTDATASQSPPPKEGARLAVDAPRVKGSISLVGARFDDLVLRDYHETVDKNSPLVRLLAPLSGDEPYYVEYGWVPEESGIATPGRDTEWKADAATLTPNKPVTLSWDNGAGLTFMLKVAVDADYMFSVTQSVRNTTGKPVVLHPYARVRRDYRPEVEGYTVLHEGLIGVVDGILHEITYKSADSDGAKNNGLAFEHASTGGWAGITDKYWLTALIPDQITSVDFSFRDTKPNGRDGYQVGIISHNPDQVAAGAESASTTHLFAGAKVVSLLDHYQAEYHIPSFWEAVDFGWFWFITRPFFYALDWLYHLVGNFGVAILIFTVLVKAAFYPLASKSYRSMSKMRLLAPKIQSLRERYKDDPTRMQQEVMQLYKAEGANPASGCLPMLLQFPIFFSLYKVIFVTIEMRHAPFFGWIHDLSAVDPTNLFNLFGLLPFDPTHISPFLHLGIWPLIMGGTMYLQQKMNPPMPDPVQARMFQFMPIIFTFMLARFPVGLVIYWSWNNLLSIGQQWLIQRRTKLPRPELAKV</sequence>
<gene>
    <name evidence="1" type="primary">yidC</name>
    <name type="ordered locus">GbCGDNIH1_0726</name>
</gene>
<feature type="chain" id="PRO_1000070102" description="Membrane protein insertase YidC">
    <location>
        <begin position="1"/>
        <end position="578"/>
    </location>
</feature>
<feature type="transmembrane region" description="Helical" evidence="1">
    <location>
        <begin position="7"/>
        <end position="27"/>
    </location>
</feature>
<feature type="transmembrane region" description="Helical" evidence="1">
    <location>
        <begin position="362"/>
        <end position="382"/>
    </location>
</feature>
<feature type="transmembrane region" description="Helical" evidence="1">
    <location>
        <begin position="436"/>
        <end position="456"/>
    </location>
</feature>
<feature type="transmembrane region" description="Helical" evidence="1">
    <location>
        <begin position="491"/>
        <end position="511"/>
    </location>
</feature>
<feature type="transmembrane region" description="Helical" evidence="1">
    <location>
        <begin position="530"/>
        <end position="550"/>
    </location>
</feature>
<feature type="region of interest" description="Disordered" evidence="2">
    <location>
        <begin position="35"/>
        <end position="70"/>
    </location>
</feature>
<feature type="compositionally biased region" description="Polar residues" evidence="2">
    <location>
        <begin position="37"/>
        <end position="50"/>
    </location>
</feature>
<organism>
    <name type="scientific">Granulibacter bethesdensis (strain ATCC BAA-1260 / CGDNIH1)</name>
    <dbReference type="NCBI Taxonomy" id="391165"/>
    <lineage>
        <taxon>Bacteria</taxon>
        <taxon>Pseudomonadati</taxon>
        <taxon>Pseudomonadota</taxon>
        <taxon>Alphaproteobacteria</taxon>
        <taxon>Acetobacterales</taxon>
        <taxon>Acetobacteraceae</taxon>
        <taxon>Granulibacter</taxon>
    </lineage>
</organism>
<keyword id="KW-0997">Cell inner membrane</keyword>
<keyword id="KW-1003">Cell membrane</keyword>
<keyword id="KW-0143">Chaperone</keyword>
<keyword id="KW-0472">Membrane</keyword>
<keyword id="KW-0653">Protein transport</keyword>
<keyword id="KW-1185">Reference proteome</keyword>
<keyword id="KW-0812">Transmembrane</keyword>
<keyword id="KW-1133">Transmembrane helix</keyword>
<keyword id="KW-0813">Transport</keyword>
<proteinExistence type="inferred from homology"/>
<name>YIDC_GRABC</name>
<reference key="1">
    <citation type="journal article" date="2007" name="J. Bacteriol.">
        <title>Genome sequence analysis of the emerging human pathogenic acetic acid bacterium Granulibacter bethesdensis.</title>
        <authorList>
            <person name="Greenberg D.E."/>
            <person name="Porcella S.F."/>
            <person name="Zelazny A.M."/>
            <person name="Virtaneva K."/>
            <person name="Sturdevant D.E."/>
            <person name="Kupko J.J. III"/>
            <person name="Barbian K.D."/>
            <person name="Babar A."/>
            <person name="Dorward D.W."/>
            <person name="Holland S.M."/>
        </authorList>
    </citation>
    <scope>NUCLEOTIDE SEQUENCE [LARGE SCALE GENOMIC DNA]</scope>
    <source>
        <strain>ATCC BAA-1260 / CGDNIH1</strain>
    </source>
</reference>
<accession>Q0BU78</accession>
<dbReference type="EMBL" id="CP000394">
    <property type="protein sequence ID" value="ABI61624.1"/>
    <property type="molecule type" value="Genomic_DNA"/>
</dbReference>
<dbReference type="RefSeq" id="WP_011631433.1">
    <property type="nucleotide sequence ID" value="NC_008343.2"/>
</dbReference>
<dbReference type="SMR" id="Q0BU78"/>
<dbReference type="STRING" id="391165.GbCGDNIH1_0726"/>
<dbReference type="KEGG" id="gbe:GbCGDNIH1_0726"/>
<dbReference type="eggNOG" id="COG0706">
    <property type="taxonomic scope" value="Bacteria"/>
</dbReference>
<dbReference type="HOGENOM" id="CLU_016535_1_0_5"/>
<dbReference type="OrthoDB" id="9780552at2"/>
<dbReference type="Proteomes" id="UP000001963">
    <property type="component" value="Chromosome"/>
</dbReference>
<dbReference type="GO" id="GO:0005886">
    <property type="term" value="C:plasma membrane"/>
    <property type="evidence" value="ECO:0007669"/>
    <property type="project" value="UniProtKB-SubCell"/>
</dbReference>
<dbReference type="GO" id="GO:0032977">
    <property type="term" value="F:membrane insertase activity"/>
    <property type="evidence" value="ECO:0007669"/>
    <property type="project" value="InterPro"/>
</dbReference>
<dbReference type="GO" id="GO:0051205">
    <property type="term" value="P:protein insertion into membrane"/>
    <property type="evidence" value="ECO:0007669"/>
    <property type="project" value="TreeGrafter"/>
</dbReference>
<dbReference type="GO" id="GO:0015031">
    <property type="term" value="P:protein transport"/>
    <property type="evidence" value="ECO:0007669"/>
    <property type="project" value="UniProtKB-KW"/>
</dbReference>
<dbReference type="CDD" id="cd20070">
    <property type="entry name" value="5TM_YidC_Alb3"/>
    <property type="match status" value="1"/>
</dbReference>
<dbReference type="CDD" id="cd19961">
    <property type="entry name" value="EcYidC-like_peri"/>
    <property type="match status" value="1"/>
</dbReference>
<dbReference type="Gene3D" id="2.70.98.90">
    <property type="match status" value="1"/>
</dbReference>
<dbReference type="HAMAP" id="MF_01810">
    <property type="entry name" value="YidC_type1"/>
    <property type="match status" value="1"/>
</dbReference>
<dbReference type="InterPro" id="IPR019998">
    <property type="entry name" value="Membr_insert_YidC"/>
</dbReference>
<dbReference type="InterPro" id="IPR028053">
    <property type="entry name" value="Membr_insert_YidC_N"/>
</dbReference>
<dbReference type="InterPro" id="IPR001708">
    <property type="entry name" value="YidC/ALB3/OXA1/COX18"/>
</dbReference>
<dbReference type="InterPro" id="IPR028055">
    <property type="entry name" value="YidC/Oxa/ALB_C"/>
</dbReference>
<dbReference type="InterPro" id="IPR047196">
    <property type="entry name" value="YidC_ALB_C"/>
</dbReference>
<dbReference type="InterPro" id="IPR038221">
    <property type="entry name" value="YidC_periplasmic_sf"/>
</dbReference>
<dbReference type="NCBIfam" id="NF002353">
    <property type="entry name" value="PRK01318.1-4"/>
    <property type="match status" value="1"/>
</dbReference>
<dbReference type="NCBIfam" id="TIGR03593">
    <property type="entry name" value="yidC_nterm"/>
    <property type="match status" value="1"/>
</dbReference>
<dbReference type="NCBIfam" id="TIGR03592">
    <property type="entry name" value="yidC_oxa1_cterm"/>
    <property type="match status" value="1"/>
</dbReference>
<dbReference type="PANTHER" id="PTHR12428:SF65">
    <property type="entry name" value="CYTOCHROME C OXIDASE ASSEMBLY PROTEIN COX18, MITOCHONDRIAL"/>
    <property type="match status" value="1"/>
</dbReference>
<dbReference type="PANTHER" id="PTHR12428">
    <property type="entry name" value="OXA1"/>
    <property type="match status" value="1"/>
</dbReference>
<dbReference type="Pfam" id="PF02096">
    <property type="entry name" value="60KD_IMP"/>
    <property type="match status" value="1"/>
</dbReference>
<dbReference type="Pfam" id="PF14849">
    <property type="entry name" value="YidC_periplas"/>
    <property type="match status" value="1"/>
</dbReference>
<dbReference type="PRINTS" id="PR00701">
    <property type="entry name" value="60KDINNERMP"/>
</dbReference>
<dbReference type="PRINTS" id="PR01900">
    <property type="entry name" value="YIDCPROTEIN"/>
</dbReference>
<comment type="function">
    <text evidence="1">Required for the insertion and/or proper folding and/or complex formation of integral membrane proteins into the membrane. Involved in integration of membrane proteins that insert both dependently and independently of the Sec translocase complex, as well as at least some lipoproteins. Aids folding of multispanning membrane proteins.</text>
</comment>
<comment type="subunit">
    <text evidence="1">Interacts with the Sec translocase complex via SecD. Specifically interacts with transmembrane segments of nascent integral membrane proteins during membrane integration.</text>
</comment>
<comment type="subcellular location">
    <subcellularLocation>
        <location evidence="1">Cell inner membrane</location>
        <topology evidence="1">Multi-pass membrane protein</topology>
    </subcellularLocation>
</comment>
<comment type="similarity">
    <text evidence="1">Belongs to the OXA1/ALB3/YidC family. Type 1 subfamily.</text>
</comment>